<evidence type="ECO:0000269" key="1">
    <source>
    </source>
</evidence>
<evidence type="ECO:0000269" key="2">
    <source>
    </source>
</evidence>
<evidence type="ECO:0000269" key="3">
    <source>
    </source>
</evidence>
<evidence type="ECO:0000269" key="4">
    <source>
    </source>
</evidence>
<evidence type="ECO:0000303" key="5">
    <source>
    </source>
</evidence>
<evidence type="ECO:0007744" key="6">
    <source>
        <dbReference type="PDB" id="3VPI"/>
    </source>
</evidence>
<evidence type="ECO:0007744" key="7">
    <source>
        <dbReference type="PDB" id="3VPJ"/>
    </source>
</evidence>
<evidence type="ECO:0007744" key="8">
    <source>
        <dbReference type="PDB" id="4EOB"/>
    </source>
</evidence>
<evidence type="ECO:0007744" key="9">
    <source>
        <dbReference type="PDB" id="4EQ8"/>
    </source>
</evidence>
<evidence type="ECO:0007744" key="10">
    <source>
        <dbReference type="PDB" id="4EQA"/>
    </source>
</evidence>
<evidence type="ECO:0007744" key="11">
    <source>
        <dbReference type="PDB" id="4F0V"/>
    </source>
</evidence>
<evidence type="ECO:0007744" key="12">
    <source>
        <dbReference type="PDB" id="4F0W"/>
    </source>
</evidence>
<evidence type="ECO:0007744" key="13">
    <source>
        <dbReference type="PDB" id="4F4M"/>
    </source>
</evidence>
<evidence type="ECO:0007744" key="14">
    <source>
        <dbReference type="PDB" id="4FGD"/>
    </source>
</evidence>
<evidence type="ECO:0007744" key="15">
    <source>
        <dbReference type="PDB" id="4FGI"/>
    </source>
</evidence>
<evidence type="ECO:0007744" key="16">
    <source>
        <dbReference type="PDB" id="4FQA"/>
    </source>
</evidence>
<evidence type="ECO:0007744" key="17">
    <source>
        <dbReference type="PDB" id="4FQB"/>
    </source>
</evidence>
<evidence type="ECO:0007829" key="18">
    <source>
        <dbReference type="PDB" id="4F0W"/>
    </source>
</evidence>
<evidence type="ECO:0007829" key="19">
    <source>
        <dbReference type="PDB" id="4FGI"/>
    </source>
</evidence>
<sequence>MDSLDQCIVNACKNSWDKSYLAGTPNKDNCSGFVQSVAAELGVPMPRGNANAMVDGLEQSWTKLASGAEAAQKAAQGFLVIAGLKGRTYGHVAVVISGPLYRQKYPMCWCGSIAGAVGQSQGLKSVGQVWNRTDRDRLNYYVYSLASCSLPRAS</sequence>
<keyword id="KW-0002">3D-structure</keyword>
<keyword id="KW-1015">Disulfide bond</keyword>
<keyword id="KW-1043">Host membrane</keyword>
<keyword id="KW-0378">Hydrolase</keyword>
<keyword id="KW-0472">Membrane</keyword>
<keyword id="KW-1185">Reference proteome</keyword>
<keyword id="KW-0964">Secreted</keyword>
<organism>
    <name type="scientific">Pseudomonas aeruginosa (strain ATCC 15692 / DSM 22644 / CIP 104116 / JCM 14847 / LMG 12228 / 1C / PRS 101 / PAO1)</name>
    <dbReference type="NCBI Taxonomy" id="208964"/>
    <lineage>
        <taxon>Bacteria</taxon>
        <taxon>Pseudomonadati</taxon>
        <taxon>Pseudomonadota</taxon>
        <taxon>Gammaproteobacteria</taxon>
        <taxon>Pseudomonadales</taxon>
        <taxon>Pseudomonadaceae</taxon>
        <taxon>Pseudomonas</taxon>
    </lineage>
</organism>
<comment type="function">
    <text evidence="1 2 3 4">Toxin secreted by the H1 type VI (H1-T6SS) secretion system into the periplasm of recipient cells. Degrades peptidoglycan via amidase activity thereby helping itself to compete with other bacteria (PubMed:21776080, PubMed:22700987, PubMed:22813741, PubMed:22931054). To protect itself, the bacterium synthesizes immunity protein Tsi1 that specifically interacts with and inactivates cognate toxin (PubMed:21776080, PubMed:22700987, PubMed:22931054).</text>
</comment>
<comment type="catalytic activity">
    <reaction evidence="1 2 4">
        <text>Hydrolysis of gamma-D-glutamyl bonds to the L-terminus (position 7) of meso-diaminopimelic acid (meso-A2pm) in 7-(L-Ala-gamma-D-Glu)-meso-A2pm and 7-(L-Ala-gamma-D-Glu)-7-(D-Ala)-meso-A2pm. It is required that the D-terminal amino and carboxy groups of meso-A2pm are unsubstituted.</text>
        <dbReference type="EC" id="3.4.19.11"/>
    </reaction>
</comment>
<comment type="subunit">
    <text evidence="4">Forms a heterotetramer with Tsi1 consisting of two Tse1 dimers and two Tsi1 dimers. Formation of the complex inactivates Tse1 enzymatic activity.</text>
</comment>
<comment type="subcellular location">
    <subcellularLocation>
        <location evidence="1">Host membrane</location>
    </subcellularLocation>
    <subcellularLocation>
        <location evidence="1">Secreted</location>
    </subcellularLocation>
    <text evidence="1">Delivered to the target cell periplasm by the H1 type VI (H1-T6SS) secretion system.</text>
</comment>
<dbReference type="EC" id="3.4.19.11" evidence="1 2 3 4"/>
<dbReference type="EMBL" id="AE004091">
    <property type="protein sequence ID" value="AAG05233.1"/>
    <property type="molecule type" value="Genomic_DNA"/>
</dbReference>
<dbReference type="PIR" id="F83415">
    <property type="entry name" value="F83415"/>
</dbReference>
<dbReference type="RefSeq" id="NP_250535.1">
    <property type="nucleotide sequence ID" value="NC_002516.2"/>
</dbReference>
<dbReference type="RefSeq" id="WP_003088027.1">
    <property type="nucleotide sequence ID" value="NZ_QZGE01000003.1"/>
</dbReference>
<dbReference type="PDB" id="3VPI">
    <property type="method" value="X-ray"/>
    <property type="resolution" value="1.50 A"/>
    <property type="chains" value="A=1-154"/>
</dbReference>
<dbReference type="PDB" id="3VPJ">
    <property type="method" value="X-ray"/>
    <property type="resolution" value="2.50 A"/>
    <property type="chains" value="A/B/C/D=1-154"/>
</dbReference>
<dbReference type="PDB" id="4EOB">
    <property type="method" value="X-ray"/>
    <property type="resolution" value="2.61 A"/>
    <property type="chains" value="A/B/C/D=1-154"/>
</dbReference>
<dbReference type="PDB" id="4EQ8">
    <property type="method" value="X-ray"/>
    <property type="resolution" value="1.39 A"/>
    <property type="chains" value="A=1-154"/>
</dbReference>
<dbReference type="PDB" id="4EQA">
    <property type="method" value="X-ray"/>
    <property type="resolution" value="1.60 A"/>
    <property type="chains" value="A/B=6-148"/>
</dbReference>
<dbReference type="PDB" id="4F0V">
    <property type="method" value="X-ray"/>
    <property type="resolution" value="1.60 A"/>
    <property type="chains" value="A=1-154"/>
</dbReference>
<dbReference type="PDB" id="4F0W">
    <property type="method" value="X-ray"/>
    <property type="resolution" value="1.24 A"/>
    <property type="chains" value="A=1-154"/>
</dbReference>
<dbReference type="PDB" id="4F4M">
    <property type="method" value="X-ray"/>
    <property type="resolution" value="2.68 A"/>
    <property type="chains" value="A/B/C/D=1-154"/>
</dbReference>
<dbReference type="PDB" id="4FGD">
    <property type="method" value="X-ray"/>
    <property type="resolution" value="2.60 A"/>
    <property type="chains" value="A/B/C/D=1-154"/>
</dbReference>
<dbReference type="PDB" id="4FGE">
    <property type="method" value="X-ray"/>
    <property type="resolution" value="1.70 A"/>
    <property type="chains" value="A/B/C/D=1-154"/>
</dbReference>
<dbReference type="PDB" id="4FGI">
    <property type="method" value="X-ray"/>
    <property type="resolution" value="3.20 A"/>
    <property type="chains" value="A/C/E/G=1-154"/>
</dbReference>
<dbReference type="PDB" id="4FQA">
    <property type="method" value="X-ray"/>
    <property type="resolution" value="2.10 A"/>
    <property type="chains" value="A=1-154"/>
</dbReference>
<dbReference type="PDB" id="4FQB">
    <property type="method" value="X-ray"/>
    <property type="resolution" value="2.69 A"/>
    <property type="chains" value="A/C/E/G=1-154"/>
</dbReference>
<dbReference type="PDB" id="7TVH">
    <property type="method" value="X-ray"/>
    <property type="resolution" value="1.71 A"/>
    <property type="chains" value="A/B/C/D=1-154"/>
</dbReference>
<dbReference type="PDBsum" id="3VPI"/>
<dbReference type="PDBsum" id="3VPJ"/>
<dbReference type="PDBsum" id="4EOB"/>
<dbReference type="PDBsum" id="4EQ8"/>
<dbReference type="PDBsum" id="4EQA"/>
<dbReference type="PDBsum" id="4F0V"/>
<dbReference type="PDBsum" id="4F0W"/>
<dbReference type="PDBsum" id="4F4M"/>
<dbReference type="PDBsum" id="4FGD"/>
<dbReference type="PDBsum" id="4FGE"/>
<dbReference type="PDBsum" id="4FGI"/>
<dbReference type="PDBsum" id="4FQA"/>
<dbReference type="PDBsum" id="4FQB"/>
<dbReference type="PDBsum" id="7TVH"/>
<dbReference type="SMR" id="Q9I2Q1"/>
<dbReference type="STRING" id="208964.PA1844"/>
<dbReference type="PaxDb" id="208964-PA1844"/>
<dbReference type="DNASU" id="880830"/>
<dbReference type="GeneID" id="880830"/>
<dbReference type="KEGG" id="pae:PA1844"/>
<dbReference type="PATRIC" id="fig|208964.12.peg.1917"/>
<dbReference type="PseudoCAP" id="PA1844"/>
<dbReference type="HOGENOM" id="CLU_1685041_0_0_6"/>
<dbReference type="InParanoid" id="Q9I2Q1"/>
<dbReference type="OrthoDB" id="8450839at2"/>
<dbReference type="BioCyc" id="PAER208964:G1FZ6-1883-MONOMER"/>
<dbReference type="EvolutionaryTrace" id="Q9I2Q1"/>
<dbReference type="Proteomes" id="UP000002438">
    <property type="component" value="Chromosome"/>
</dbReference>
<dbReference type="GO" id="GO:0005576">
    <property type="term" value="C:extracellular region"/>
    <property type="evidence" value="ECO:0007669"/>
    <property type="project" value="UniProtKB-SubCell"/>
</dbReference>
<dbReference type="GO" id="GO:0033644">
    <property type="term" value="C:host cell membrane"/>
    <property type="evidence" value="ECO:0007669"/>
    <property type="project" value="UniProtKB-SubCell"/>
</dbReference>
<dbReference type="GO" id="GO:0016020">
    <property type="term" value="C:membrane"/>
    <property type="evidence" value="ECO:0007669"/>
    <property type="project" value="UniProtKB-KW"/>
</dbReference>
<dbReference type="GO" id="GO:0004040">
    <property type="term" value="F:amidase activity"/>
    <property type="evidence" value="ECO:0000314"/>
    <property type="project" value="PseudoCAP"/>
</dbReference>
<dbReference type="FunFam" id="3.90.1720.10:FF:000012">
    <property type="entry name" value="Uncharacterized protein"/>
    <property type="match status" value="1"/>
</dbReference>
<dbReference type="Gene3D" id="3.90.1720.10">
    <property type="entry name" value="endopeptidase domain like (from Nostoc punctiforme)"/>
    <property type="match status" value="1"/>
</dbReference>
<dbReference type="InterPro" id="IPR038765">
    <property type="entry name" value="Papain-like_cys_pep_sf"/>
</dbReference>
<dbReference type="SUPFAM" id="SSF54001">
    <property type="entry name" value="Cysteine proteinases"/>
    <property type="match status" value="1"/>
</dbReference>
<protein>
    <recommendedName>
        <fullName evidence="5">Peptidoglycan amidase Tse1</fullName>
        <ecNumber evidence="1 2 3 4">3.4.19.11</ecNumber>
    </recommendedName>
    <alternativeName>
        <fullName>Type VI secretion exported 1</fullName>
    </alternativeName>
</protein>
<proteinExistence type="evidence at protein level"/>
<feature type="chain" id="PRO_0000449039" description="Peptidoglycan amidase Tse1">
    <location>
        <begin position="1"/>
        <end position="154"/>
    </location>
</feature>
<feature type="active site" description="Nucleophile" evidence="3 4">
    <location>
        <position position="30"/>
    </location>
</feature>
<feature type="active site" description="Proton acceptor" evidence="3 4">
    <location>
        <position position="91"/>
    </location>
</feature>
<feature type="disulfide bond" evidence="6 7 8 9 10 11 12 13 14 15 16 17">
    <location>
        <begin position="7"/>
        <end position="148"/>
    </location>
</feature>
<feature type="mutagenesis site" description="Complete loss of peptidoglycan degradation." evidence="1 2">
    <original>C</original>
    <variation>A</variation>
    <location>
        <position position="30"/>
    </location>
</feature>
<feature type="mutagenesis site" description="Complete loss of peptidoglycan degradation." evidence="1 2">
    <original>H</original>
    <variation>A</variation>
    <location>
        <position position="91"/>
    </location>
</feature>
<feature type="mutagenesis site" description="No loss of catalytic activity." evidence="2 4">
    <original>C</original>
    <variation>A</variation>
    <location>
        <position position="110"/>
    </location>
</feature>
<feature type="helix" evidence="18">
    <location>
        <begin position="6"/>
        <end position="16"/>
    </location>
</feature>
<feature type="strand" evidence="19">
    <location>
        <begin position="20"/>
        <end position="24"/>
    </location>
</feature>
<feature type="helix" evidence="18">
    <location>
        <begin position="26"/>
        <end position="28"/>
    </location>
</feature>
<feature type="helix" evidence="18">
    <location>
        <begin position="30"/>
        <end position="41"/>
    </location>
</feature>
<feature type="helix" evidence="18">
    <location>
        <begin position="50"/>
        <end position="60"/>
    </location>
</feature>
<feature type="strand" evidence="18">
    <location>
        <begin position="61"/>
        <end position="63"/>
    </location>
</feature>
<feature type="helix" evidence="18">
    <location>
        <begin position="67"/>
        <end position="75"/>
    </location>
</feature>
<feature type="strand" evidence="18">
    <location>
        <begin position="80"/>
        <end position="84"/>
    </location>
</feature>
<feature type="strand" evidence="18">
    <location>
        <begin position="91"/>
        <end position="95"/>
    </location>
</feature>
<feature type="turn" evidence="18">
    <location>
        <begin position="102"/>
        <end position="104"/>
    </location>
</feature>
<feature type="strand" evidence="18">
    <location>
        <begin position="107"/>
        <end position="110"/>
    </location>
</feature>
<feature type="helix" evidence="18">
    <location>
        <begin position="116"/>
        <end position="118"/>
    </location>
</feature>
<feature type="strand" evidence="18">
    <location>
        <begin position="120"/>
        <end position="125"/>
    </location>
</feature>
<feature type="helix" evidence="18">
    <location>
        <begin position="126"/>
        <end position="129"/>
    </location>
</feature>
<feature type="turn" evidence="18">
    <location>
        <begin position="132"/>
        <end position="136"/>
    </location>
</feature>
<feature type="strand" evidence="18">
    <location>
        <begin position="139"/>
        <end position="142"/>
    </location>
</feature>
<accession>Q9I2Q1</accession>
<reference key="1">
    <citation type="journal article" date="2000" name="Nature">
        <title>Complete genome sequence of Pseudomonas aeruginosa PAO1, an opportunistic pathogen.</title>
        <authorList>
            <person name="Stover C.K."/>
            <person name="Pham X.-Q.T."/>
            <person name="Erwin A.L."/>
            <person name="Mizoguchi S.D."/>
            <person name="Warrener P."/>
            <person name="Hickey M.J."/>
            <person name="Brinkman F.S.L."/>
            <person name="Hufnagle W.O."/>
            <person name="Kowalik D.J."/>
            <person name="Lagrou M."/>
            <person name="Garber R.L."/>
            <person name="Goltry L."/>
            <person name="Tolentino E."/>
            <person name="Westbrock-Wadman S."/>
            <person name="Yuan Y."/>
            <person name="Brody L.L."/>
            <person name="Coulter S.N."/>
            <person name="Folger K.R."/>
            <person name="Kas A."/>
            <person name="Larbig K."/>
            <person name="Lim R.M."/>
            <person name="Smith K.A."/>
            <person name="Spencer D.H."/>
            <person name="Wong G.K.-S."/>
            <person name="Wu Z."/>
            <person name="Paulsen I.T."/>
            <person name="Reizer J."/>
            <person name="Saier M.H. Jr."/>
            <person name="Hancock R.E.W."/>
            <person name="Lory S."/>
            <person name="Olson M.V."/>
        </authorList>
    </citation>
    <scope>NUCLEOTIDE SEQUENCE [LARGE SCALE GENOMIC DNA]</scope>
    <source>
        <strain>ATCC 15692 / DSM 22644 / CIP 104116 / JCM 14847 / LMG 12228 / 1C / PRS 101 / PAO1</strain>
    </source>
</reference>
<reference key="2">
    <citation type="journal article" date="2011" name="Nature">
        <title>Type VI secretion delivers bacteriolytic effectors to target cells.</title>
        <authorList>
            <person name="Russell A.B."/>
            <person name="Hood R.D."/>
            <person name="Bui N.K."/>
            <person name="LeRoux M."/>
            <person name="Vollmer W."/>
            <person name="Mougous J.D."/>
        </authorList>
    </citation>
    <scope>FUNCTION</scope>
    <scope>MUTAGENESIS OF CYS-30</scope>
    <scope>CATALYTIC ACTIVITY</scope>
    <scope>SUBCELLULAR LOCATION</scope>
</reference>
<reference evidence="9 10" key="3">
    <citation type="journal article" date="2012" name="Biochem. J.">
        <title>Structural insight into how Pseudomonas aeruginosa peptidoglycanhydrolase Tse1 and its immunity protein Tsi1 function.</title>
        <authorList>
            <person name="Shang G."/>
            <person name="Liu X."/>
            <person name="Lu D."/>
            <person name="Zhang J."/>
            <person name="Li N."/>
            <person name="Zhu C."/>
            <person name="Liu S."/>
            <person name="Yu Q."/>
            <person name="Zhao Y."/>
            <person name="Zhang H."/>
            <person name="Hu J."/>
            <person name="Cang H."/>
            <person name="Xu S."/>
            <person name="Gu L."/>
        </authorList>
    </citation>
    <scope>X-RAY CRYSTALLOGRAPHY (1.39 ANGSTROMS)</scope>
    <scope>DISULFIDE BONDS</scope>
    <scope>INTERACTION WITH TSI1</scope>
    <scope>CATALYTIC ACTIVITY</scope>
    <scope>ACTIVE SITE</scope>
    <scope>MUTAGENESIS OF CYS-30; HIS-91 AND CYS-110</scope>
    <scope>FUNCTION</scope>
</reference>
<reference evidence="8 13" key="4">
    <citation type="journal article" date="2012" name="Cell Rep.">
        <title>Structure of a peptidoglycan amidase effector targeted to Gram-negative bacteria by the type VI secretion system.</title>
        <authorList>
            <person name="Chou S."/>
            <person name="Bui N.K."/>
            <person name="Russell A.B."/>
            <person name="Lexa K.W."/>
            <person name="Gardiner T.E."/>
            <person name="LeRoux M."/>
            <person name="Vollmer W."/>
            <person name="Mougous J.D."/>
        </authorList>
    </citation>
    <scope>X-RAY CRYSTALLOGRAPHY (2.61 ANGSTROMS)</scope>
    <scope>DISULFIDE BONDS</scope>
    <scope>ACTIVE SITE</scope>
    <scope>CATALYTIC ACTIVITY</scope>
    <scope>FUNCTION</scope>
</reference>
<reference evidence="6 7" key="5">
    <citation type="journal article" date="2012" name="J. Biol. Chem.">
        <title>Structural insights into the Pseudomonas aeruginosa type VI virulence effector Tse1 bacteriolysis and self-protection mechanisms.</title>
        <authorList>
            <person name="Ding J."/>
            <person name="Wang W."/>
            <person name="Feng H."/>
            <person name="Zhang Y."/>
            <person name="Wang D.C."/>
        </authorList>
    </citation>
    <scope>X-RAY CRYSTALLOGRAPHY (1.50 ANGSTROMS)</scope>
    <scope>DISULFIDE BONDS</scope>
    <scope>INTERACTION WITH TSI1</scope>
    <scope>CATALYTIC ACTIVITY</scope>
    <scope>ACTIVE SITE</scope>
    <scope>MUTAGENESIS OF CYS-30; HIS-91 AND CYS-110</scope>
    <scope>FUNCTION</scope>
</reference>
<gene>
    <name evidence="5" type="primary">tse1</name>
    <name type="ordered locus">PA1844</name>
</gene>
<name>TSE1_PSEAE</name>